<feature type="chain" id="PRO_0000385795" description="GTPase Obg">
    <location>
        <begin position="1"/>
        <end position="370"/>
    </location>
</feature>
<feature type="domain" description="Obg" evidence="2">
    <location>
        <begin position="1"/>
        <end position="159"/>
    </location>
</feature>
<feature type="domain" description="OBG-type G" evidence="1">
    <location>
        <begin position="160"/>
        <end position="334"/>
    </location>
</feature>
<feature type="region of interest" description="Disordered" evidence="3">
    <location>
        <begin position="127"/>
        <end position="146"/>
    </location>
</feature>
<feature type="region of interest" description="Disordered" evidence="3">
    <location>
        <begin position="350"/>
        <end position="370"/>
    </location>
</feature>
<feature type="binding site" evidence="1">
    <location>
        <begin position="166"/>
        <end position="173"/>
    </location>
    <ligand>
        <name>GTP</name>
        <dbReference type="ChEBI" id="CHEBI:37565"/>
    </ligand>
</feature>
<feature type="binding site" evidence="1">
    <location>
        <position position="173"/>
    </location>
    <ligand>
        <name>Mg(2+)</name>
        <dbReference type="ChEBI" id="CHEBI:18420"/>
    </ligand>
</feature>
<feature type="binding site" evidence="1">
    <location>
        <begin position="191"/>
        <end position="195"/>
    </location>
    <ligand>
        <name>GTP</name>
        <dbReference type="ChEBI" id="CHEBI:37565"/>
    </ligand>
</feature>
<feature type="binding site" evidence="1">
    <location>
        <position position="193"/>
    </location>
    <ligand>
        <name>Mg(2+)</name>
        <dbReference type="ChEBI" id="CHEBI:18420"/>
    </ligand>
</feature>
<feature type="binding site" evidence="1">
    <location>
        <begin position="213"/>
        <end position="216"/>
    </location>
    <ligand>
        <name>GTP</name>
        <dbReference type="ChEBI" id="CHEBI:37565"/>
    </ligand>
</feature>
<feature type="binding site" evidence="1">
    <location>
        <begin position="284"/>
        <end position="287"/>
    </location>
    <ligand>
        <name>GTP</name>
        <dbReference type="ChEBI" id="CHEBI:37565"/>
    </ligand>
</feature>
<feature type="binding site" evidence="1">
    <location>
        <begin position="315"/>
        <end position="317"/>
    </location>
    <ligand>
        <name>GTP</name>
        <dbReference type="ChEBI" id="CHEBI:37565"/>
    </ligand>
</feature>
<evidence type="ECO:0000255" key="1">
    <source>
        <dbReference type="HAMAP-Rule" id="MF_01454"/>
    </source>
</evidence>
<evidence type="ECO:0000255" key="2">
    <source>
        <dbReference type="PROSITE-ProRule" id="PRU01231"/>
    </source>
</evidence>
<evidence type="ECO:0000256" key="3">
    <source>
        <dbReference type="SAM" id="MobiDB-lite"/>
    </source>
</evidence>
<sequence length="370" mass="39720">MKFIDEARIEVIAGDGGDGSASMRREKFVPFGGPDGGDGGRGGNVYAIADRNINTLIDYRYAKKHMARNGENGRGSDCYGKGGDDITLRMPVGTVVTDMDTGELIADLTEHDQQVMLAKGGSGGLGNLHFKSSTNRAPRQKTDGKPGERRMLRLELKVLADVGLLGMPNAGKSTFISSVSNAKPKIADYPFTTLAPNLGVVRVGPSKSFVIADIPGLIEGAAEGAGLGHQFLRHLQRTGVLLHLVDLAPFDESVDPVAEAKAIVGELRKYDEALYEKPRWLVLNKLDMVPEDERDARVADFLERFGWDGPVFQISALTGQGCEALCYAIYDYLAEHSDAHRAAEEEDLAADVRFRDAPPSDGGATSGGDA</sequence>
<accession>A4JBB8</accession>
<organism>
    <name type="scientific">Burkholderia vietnamiensis (strain G4 / LMG 22486)</name>
    <name type="common">Burkholderia cepacia (strain R1808)</name>
    <dbReference type="NCBI Taxonomy" id="269482"/>
    <lineage>
        <taxon>Bacteria</taxon>
        <taxon>Pseudomonadati</taxon>
        <taxon>Pseudomonadota</taxon>
        <taxon>Betaproteobacteria</taxon>
        <taxon>Burkholderiales</taxon>
        <taxon>Burkholderiaceae</taxon>
        <taxon>Burkholderia</taxon>
        <taxon>Burkholderia cepacia complex</taxon>
    </lineage>
</organism>
<protein>
    <recommendedName>
        <fullName evidence="1">GTPase Obg</fullName>
        <ecNumber evidence="1">3.6.5.-</ecNumber>
    </recommendedName>
    <alternativeName>
        <fullName evidence="1">GTP-binding protein Obg</fullName>
    </alternativeName>
</protein>
<name>OBG_BURVG</name>
<gene>
    <name evidence="1" type="primary">obg</name>
    <name type="ordered locus">Bcep1808_0559</name>
</gene>
<reference key="1">
    <citation type="submission" date="2007-03" db="EMBL/GenBank/DDBJ databases">
        <title>Complete sequence of chromosome 1 of Burkholderia vietnamiensis G4.</title>
        <authorList>
            <consortium name="US DOE Joint Genome Institute"/>
            <person name="Copeland A."/>
            <person name="Lucas S."/>
            <person name="Lapidus A."/>
            <person name="Barry K."/>
            <person name="Detter J.C."/>
            <person name="Glavina del Rio T."/>
            <person name="Hammon N."/>
            <person name="Israni S."/>
            <person name="Dalin E."/>
            <person name="Tice H."/>
            <person name="Pitluck S."/>
            <person name="Chain P."/>
            <person name="Malfatti S."/>
            <person name="Shin M."/>
            <person name="Vergez L."/>
            <person name="Schmutz J."/>
            <person name="Larimer F."/>
            <person name="Land M."/>
            <person name="Hauser L."/>
            <person name="Kyrpides N."/>
            <person name="Tiedje J."/>
            <person name="Richardson P."/>
        </authorList>
    </citation>
    <scope>NUCLEOTIDE SEQUENCE [LARGE SCALE GENOMIC DNA]</scope>
    <source>
        <strain>G4 / LMG 22486</strain>
    </source>
</reference>
<comment type="function">
    <text evidence="1">An essential GTPase which binds GTP, GDP and possibly (p)ppGpp with moderate affinity, with high nucleotide exchange rates and a fairly low GTP hydrolysis rate. Plays a role in control of the cell cycle, stress response, ribosome biogenesis and in those bacteria that undergo differentiation, in morphogenesis control.</text>
</comment>
<comment type="cofactor">
    <cofactor evidence="1">
        <name>Mg(2+)</name>
        <dbReference type="ChEBI" id="CHEBI:18420"/>
    </cofactor>
</comment>
<comment type="subunit">
    <text evidence="1">Monomer.</text>
</comment>
<comment type="subcellular location">
    <subcellularLocation>
        <location evidence="1">Cytoplasm</location>
    </subcellularLocation>
</comment>
<comment type="similarity">
    <text evidence="1">Belongs to the TRAFAC class OBG-HflX-like GTPase superfamily. OBG GTPase family.</text>
</comment>
<proteinExistence type="inferred from homology"/>
<dbReference type="EC" id="3.6.5.-" evidence="1"/>
<dbReference type="EMBL" id="CP000614">
    <property type="protein sequence ID" value="ABO53571.1"/>
    <property type="molecule type" value="Genomic_DNA"/>
</dbReference>
<dbReference type="SMR" id="A4JBB8"/>
<dbReference type="KEGG" id="bvi:Bcep1808_0559"/>
<dbReference type="eggNOG" id="COG0536">
    <property type="taxonomic scope" value="Bacteria"/>
</dbReference>
<dbReference type="HOGENOM" id="CLU_011747_2_0_4"/>
<dbReference type="Proteomes" id="UP000002287">
    <property type="component" value="Chromosome 1"/>
</dbReference>
<dbReference type="GO" id="GO:0005737">
    <property type="term" value="C:cytoplasm"/>
    <property type="evidence" value="ECO:0007669"/>
    <property type="project" value="UniProtKB-SubCell"/>
</dbReference>
<dbReference type="GO" id="GO:0005525">
    <property type="term" value="F:GTP binding"/>
    <property type="evidence" value="ECO:0007669"/>
    <property type="project" value="UniProtKB-UniRule"/>
</dbReference>
<dbReference type="GO" id="GO:0003924">
    <property type="term" value="F:GTPase activity"/>
    <property type="evidence" value="ECO:0007669"/>
    <property type="project" value="UniProtKB-UniRule"/>
</dbReference>
<dbReference type="GO" id="GO:0000287">
    <property type="term" value="F:magnesium ion binding"/>
    <property type="evidence" value="ECO:0007669"/>
    <property type="project" value="InterPro"/>
</dbReference>
<dbReference type="GO" id="GO:0042254">
    <property type="term" value="P:ribosome biogenesis"/>
    <property type="evidence" value="ECO:0007669"/>
    <property type="project" value="UniProtKB-UniRule"/>
</dbReference>
<dbReference type="CDD" id="cd01898">
    <property type="entry name" value="Obg"/>
    <property type="match status" value="1"/>
</dbReference>
<dbReference type="FunFam" id="2.70.210.12:FF:000001">
    <property type="entry name" value="GTPase Obg"/>
    <property type="match status" value="1"/>
</dbReference>
<dbReference type="Gene3D" id="2.70.210.12">
    <property type="entry name" value="GTP1/OBG domain"/>
    <property type="match status" value="1"/>
</dbReference>
<dbReference type="Gene3D" id="3.40.50.300">
    <property type="entry name" value="P-loop containing nucleotide triphosphate hydrolases"/>
    <property type="match status" value="1"/>
</dbReference>
<dbReference type="HAMAP" id="MF_01454">
    <property type="entry name" value="GTPase_Obg"/>
    <property type="match status" value="1"/>
</dbReference>
<dbReference type="InterPro" id="IPR031167">
    <property type="entry name" value="G_OBG"/>
</dbReference>
<dbReference type="InterPro" id="IPR006073">
    <property type="entry name" value="GTP-bd"/>
</dbReference>
<dbReference type="InterPro" id="IPR014100">
    <property type="entry name" value="GTP-bd_Obg/CgtA"/>
</dbReference>
<dbReference type="InterPro" id="IPR006074">
    <property type="entry name" value="GTP1-OBG_CS"/>
</dbReference>
<dbReference type="InterPro" id="IPR006169">
    <property type="entry name" value="GTP1_OBG_dom"/>
</dbReference>
<dbReference type="InterPro" id="IPR036726">
    <property type="entry name" value="GTP1_OBG_dom_sf"/>
</dbReference>
<dbReference type="InterPro" id="IPR045086">
    <property type="entry name" value="OBG_GTPase"/>
</dbReference>
<dbReference type="InterPro" id="IPR027417">
    <property type="entry name" value="P-loop_NTPase"/>
</dbReference>
<dbReference type="NCBIfam" id="TIGR02729">
    <property type="entry name" value="Obg_CgtA"/>
    <property type="match status" value="1"/>
</dbReference>
<dbReference type="NCBIfam" id="NF008954">
    <property type="entry name" value="PRK12296.1"/>
    <property type="match status" value="1"/>
</dbReference>
<dbReference type="NCBIfam" id="NF008955">
    <property type="entry name" value="PRK12297.1"/>
    <property type="match status" value="1"/>
</dbReference>
<dbReference type="NCBIfam" id="NF008956">
    <property type="entry name" value="PRK12299.1"/>
    <property type="match status" value="1"/>
</dbReference>
<dbReference type="PANTHER" id="PTHR11702">
    <property type="entry name" value="DEVELOPMENTALLY REGULATED GTP-BINDING PROTEIN-RELATED"/>
    <property type="match status" value="1"/>
</dbReference>
<dbReference type="PANTHER" id="PTHR11702:SF31">
    <property type="entry name" value="MITOCHONDRIAL RIBOSOME-ASSOCIATED GTPASE 2"/>
    <property type="match status" value="1"/>
</dbReference>
<dbReference type="Pfam" id="PF01018">
    <property type="entry name" value="GTP1_OBG"/>
    <property type="match status" value="1"/>
</dbReference>
<dbReference type="Pfam" id="PF01926">
    <property type="entry name" value="MMR_HSR1"/>
    <property type="match status" value="1"/>
</dbReference>
<dbReference type="PIRSF" id="PIRSF002401">
    <property type="entry name" value="GTP_bd_Obg/CgtA"/>
    <property type="match status" value="1"/>
</dbReference>
<dbReference type="PRINTS" id="PR00326">
    <property type="entry name" value="GTP1OBG"/>
</dbReference>
<dbReference type="SUPFAM" id="SSF82051">
    <property type="entry name" value="Obg GTP-binding protein N-terminal domain"/>
    <property type="match status" value="1"/>
</dbReference>
<dbReference type="SUPFAM" id="SSF52540">
    <property type="entry name" value="P-loop containing nucleoside triphosphate hydrolases"/>
    <property type="match status" value="1"/>
</dbReference>
<dbReference type="PROSITE" id="PS51710">
    <property type="entry name" value="G_OBG"/>
    <property type="match status" value="1"/>
</dbReference>
<dbReference type="PROSITE" id="PS00905">
    <property type="entry name" value="GTP1_OBG"/>
    <property type="match status" value="1"/>
</dbReference>
<dbReference type="PROSITE" id="PS51883">
    <property type="entry name" value="OBG"/>
    <property type="match status" value="1"/>
</dbReference>
<keyword id="KW-0963">Cytoplasm</keyword>
<keyword id="KW-0342">GTP-binding</keyword>
<keyword id="KW-0378">Hydrolase</keyword>
<keyword id="KW-0460">Magnesium</keyword>
<keyword id="KW-0479">Metal-binding</keyword>
<keyword id="KW-0547">Nucleotide-binding</keyword>